<geneLocation type="mitochondrion"/>
<sequence length="379" mass="42625">MTNLRKTHPLMKIINSSFIDLPAPSNISSWWNFGSLLGICLIVQILTGLFLAMHYTSDTMTAFSSVTHICRDVNYGWLIRYLHANGASMFFICLFLHVGRGLYYGSYMFLETWNIGVLLLFAVMATAFMGYVLPWGQMSFWGATVITNLLSAIPYIGSDLVEWIWGGFSVDKATLTRFFAFHFILPFIIAALAGVHLLFLHETGSNNPSGLCSDADKIPFHPYYTIKDILGVLLLILVLTSLVLFSPDLLGDPDNYTPANPLNTPPHIKPEWYFLFAYAILRSIPNKLGGVLALVLSILVLAVVPFLHTSKQRSMMFRPFSQCLFWILVADLLTLTWIGGQPVEHPFIIIGQLASILYFLLILVLMPITSLFENNLLKW</sequence>
<keyword id="KW-0249">Electron transport</keyword>
<keyword id="KW-0349">Heme</keyword>
<keyword id="KW-0408">Iron</keyword>
<keyword id="KW-0472">Membrane</keyword>
<keyword id="KW-0479">Metal-binding</keyword>
<keyword id="KW-0496">Mitochondrion</keyword>
<keyword id="KW-0999">Mitochondrion inner membrane</keyword>
<keyword id="KW-0679">Respiratory chain</keyword>
<keyword id="KW-0812">Transmembrane</keyword>
<keyword id="KW-1133">Transmembrane helix</keyword>
<keyword id="KW-0813">Transport</keyword>
<keyword id="KW-0830">Ubiquinone</keyword>
<protein>
    <recommendedName>
        <fullName>Cytochrome b</fullName>
    </recommendedName>
    <alternativeName>
        <fullName>Complex III subunit 3</fullName>
    </alternativeName>
    <alternativeName>
        <fullName>Complex III subunit III</fullName>
    </alternativeName>
    <alternativeName>
        <fullName>Cytochrome b-c1 complex subunit 3</fullName>
    </alternativeName>
    <alternativeName>
        <fullName>Ubiquinol-cytochrome-c reductase complex cytochrome b subunit</fullName>
    </alternativeName>
</protein>
<reference key="1">
    <citation type="journal article" date="2003" name="J. Mammal.">
        <title>Phylogenetic diversification within the Sorex cinereus group (Soricidae).</title>
        <authorList>
            <person name="Demboski J.R."/>
            <person name="Cook J.A."/>
        </authorList>
    </citation>
    <scope>NUCLEOTIDE SEQUENCE [GENOMIC DNA]</scope>
    <source>
        <strain>Isolate AFTC 11764</strain>
        <strain>Isolate AFTC 7213</strain>
        <strain>Isolate AFTC 7390</strain>
        <strain>Isolate AFTC 7431</strain>
    </source>
</reference>
<gene>
    <name type="primary">MT-CYB</name>
    <name type="synonym">COB</name>
    <name type="synonym">CYTB</name>
    <name type="synonym">MTCYB</name>
</gene>
<accession>Q7HFF9</accession>
<feature type="chain" id="PRO_0000061585" description="Cytochrome b">
    <location>
        <begin position="1"/>
        <end position="379"/>
    </location>
</feature>
<feature type="transmembrane region" description="Helical" evidence="2">
    <location>
        <begin position="33"/>
        <end position="53"/>
    </location>
</feature>
<feature type="transmembrane region" description="Helical" evidence="2">
    <location>
        <begin position="77"/>
        <end position="98"/>
    </location>
</feature>
<feature type="transmembrane region" description="Helical" evidence="2">
    <location>
        <begin position="113"/>
        <end position="133"/>
    </location>
</feature>
<feature type="transmembrane region" description="Helical" evidence="2">
    <location>
        <begin position="178"/>
        <end position="198"/>
    </location>
</feature>
<feature type="transmembrane region" description="Helical" evidence="2">
    <location>
        <begin position="226"/>
        <end position="246"/>
    </location>
</feature>
<feature type="transmembrane region" description="Helical" evidence="2">
    <location>
        <begin position="288"/>
        <end position="308"/>
    </location>
</feature>
<feature type="transmembrane region" description="Helical" evidence="2">
    <location>
        <begin position="320"/>
        <end position="340"/>
    </location>
</feature>
<feature type="transmembrane region" description="Helical" evidence="2">
    <location>
        <begin position="347"/>
        <end position="367"/>
    </location>
</feature>
<feature type="binding site" description="axial binding residue" evidence="2">
    <location>
        <position position="83"/>
    </location>
    <ligand>
        <name>heme b</name>
        <dbReference type="ChEBI" id="CHEBI:60344"/>
        <label>b562</label>
    </ligand>
    <ligandPart>
        <name>Fe</name>
        <dbReference type="ChEBI" id="CHEBI:18248"/>
    </ligandPart>
</feature>
<feature type="binding site" description="axial binding residue" evidence="2">
    <location>
        <position position="97"/>
    </location>
    <ligand>
        <name>heme b</name>
        <dbReference type="ChEBI" id="CHEBI:60344"/>
        <label>b566</label>
    </ligand>
    <ligandPart>
        <name>Fe</name>
        <dbReference type="ChEBI" id="CHEBI:18248"/>
    </ligandPart>
</feature>
<feature type="binding site" description="axial binding residue" evidence="2">
    <location>
        <position position="182"/>
    </location>
    <ligand>
        <name>heme b</name>
        <dbReference type="ChEBI" id="CHEBI:60344"/>
        <label>b562</label>
    </ligand>
    <ligandPart>
        <name>Fe</name>
        <dbReference type="ChEBI" id="CHEBI:18248"/>
    </ligandPart>
</feature>
<feature type="binding site" description="axial binding residue" evidence="2">
    <location>
        <position position="196"/>
    </location>
    <ligand>
        <name>heme b</name>
        <dbReference type="ChEBI" id="CHEBI:60344"/>
        <label>b566</label>
    </ligand>
    <ligandPart>
        <name>Fe</name>
        <dbReference type="ChEBI" id="CHEBI:18248"/>
    </ligandPart>
</feature>
<feature type="binding site" evidence="2">
    <location>
        <position position="201"/>
    </location>
    <ligand>
        <name>a ubiquinone</name>
        <dbReference type="ChEBI" id="CHEBI:16389"/>
    </ligand>
</feature>
<dbReference type="EMBL" id="AY014927">
    <property type="protein sequence ID" value="AAG40486.1"/>
    <property type="molecule type" value="Genomic_DNA"/>
</dbReference>
<dbReference type="EMBL" id="AY014928">
    <property type="protein sequence ID" value="AAG40487.1"/>
    <property type="molecule type" value="Genomic_DNA"/>
</dbReference>
<dbReference type="EMBL" id="AY014929">
    <property type="protein sequence ID" value="AAG40488.1"/>
    <property type="molecule type" value="Genomic_DNA"/>
</dbReference>
<dbReference type="EMBL" id="AY014930">
    <property type="protein sequence ID" value="AAG40489.1"/>
    <property type="molecule type" value="Genomic_DNA"/>
</dbReference>
<dbReference type="SMR" id="Q7HFF9"/>
<dbReference type="GO" id="GO:0005743">
    <property type="term" value="C:mitochondrial inner membrane"/>
    <property type="evidence" value="ECO:0007669"/>
    <property type="project" value="UniProtKB-SubCell"/>
</dbReference>
<dbReference type="GO" id="GO:0045275">
    <property type="term" value="C:respiratory chain complex III"/>
    <property type="evidence" value="ECO:0007669"/>
    <property type="project" value="InterPro"/>
</dbReference>
<dbReference type="GO" id="GO:0046872">
    <property type="term" value="F:metal ion binding"/>
    <property type="evidence" value="ECO:0007669"/>
    <property type="project" value="UniProtKB-KW"/>
</dbReference>
<dbReference type="GO" id="GO:0008121">
    <property type="term" value="F:ubiquinol-cytochrome-c reductase activity"/>
    <property type="evidence" value="ECO:0007669"/>
    <property type="project" value="InterPro"/>
</dbReference>
<dbReference type="GO" id="GO:0006122">
    <property type="term" value="P:mitochondrial electron transport, ubiquinol to cytochrome c"/>
    <property type="evidence" value="ECO:0007669"/>
    <property type="project" value="TreeGrafter"/>
</dbReference>
<dbReference type="CDD" id="cd00290">
    <property type="entry name" value="cytochrome_b_C"/>
    <property type="match status" value="1"/>
</dbReference>
<dbReference type="CDD" id="cd00284">
    <property type="entry name" value="Cytochrome_b_N"/>
    <property type="match status" value="1"/>
</dbReference>
<dbReference type="FunFam" id="1.20.810.10:FF:000002">
    <property type="entry name" value="Cytochrome b"/>
    <property type="match status" value="1"/>
</dbReference>
<dbReference type="Gene3D" id="1.20.810.10">
    <property type="entry name" value="Cytochrome Bc1 Complex, Chain C"/>
    <property type="match status" value="1"/>
</dbReference>
<dbReference type="InterPro" id="IPR005798">
    <property type="entry name" value="Cyt_b/b6_C"/>
</dbReference>
<dbReference type="InterPro" id="IPR036150">
    <property type="entry name" value="Cyt_b/b6_C_sf"/>
</dbReference>
<dbReference type="InterPro" id="IPR005797">
    <property type="entry name" value="Cyt_b/b6_N"/>
</dbReference>
<dbReference type="InterPro" id="IPR027387">
    <property type="entry name" value="Cytb/b6-like_sf"/>
</dbReference>
<dbReference type="InterPro" id="IPR030689">
    <property type="entry name" value="Cytochrome_b"/>
</dbReference>
<dbReference type="InterPro" id="IPR048260">
    <property type="entry name" value="Cytochrome_b_C_euk/bac"/>
</dbReference>
<dbReference type="InterPro" id="IPR048259">
    <property type="entry name" value="Cytochrome_b_N_euk/bac"/>
</dbReference>
<dbReference type="InterPro" id="IPR016174">
    <property type="entry name" value="Di-haem_cyt_TM"/>
</dbReference>
<dbReference type="PANTHER" id="PTHR19271">
    <property type="entry name" value="CYTOCHROME B"/>
    <property type="match status" value="1"/>
</dbReference>
<dbReference type="PANTHER" id="PTHR19271:SF16">
    <property type="entry name" value="CYTOCHROME B"/>
    <property type="match status" value="1"/>
</dbReference>
<dbReference type="Pfam" id="PF00032">
    <property type="entry name" value="Cytochrom_B_C"/>
    <property type="match status" value="1"/>
</dbReference>
<dbReference type="Pfam" id="PF00033">
    <property type="entry name" value="Cytochrome_B"/>
    <property type="match status" value="1"/>
</dbReference>
<dbReference type="PIRSF" id="PIRSF038885">
    <property type="entry name" value="COB"/>
    <property type="match status" value="1"/>
</dbReference>
<dbReference type="SUPFAM" id="SSF81648">
    <property type="entry name" value="a domain/subunit of cytochrome bc1 complex (Ubiquinol-cytochrome c reductase)"/>
    <property type="match status" value="1"/>
</dbReference>
<dbReference type="SUPFAM" id="SSF81342">
    <property type="entry name" value="Transmembrane di-heme cytochromes"/>
    <property type="match status" value="1"/>
</dbReference>
<dbReference type="PROSITE" id="PS51003">
    <property type="entry name" value="CYTB_CTER"/>
    <property type="match status" value="1"/>
</dbReference>
<dbReference type="PROSITE" id="PS51002">
    <property type="entry name" value="CYTB_NTER"/>
    <property type="match status" value="1"/>
</dbReference>
<name>CYB_SORUG</name>
<comment type="function">
    <text evidence="2">Component of the ubiquinol-cytochrome c reductase complex (complex III or cytochrome b-c1 complex) that is part of the mitochondrial respiratory chain. The b-c1 complex mediates electron transfer from ubiquinol to cytochrome c. Contributes to the generation of a proton gradient across the mitochondrial membrane that is then used for ATP synthesis.</text>
</comment>
<comment type="cofactor">
    <cofactor evidence="2">
        <name>heme b</name>
        <dbReference type="ChEBI" id="CHEBI:60344"/>
    </cofactor>
    <text evidence="2">Binds 2 heme b groups non-covalently.</text>
</comment>
<comment type="subunit">
    <text evidence="2">The cytochrome bc1 complex contains 11 subunits: 3 respiratory subunits (MT-CYB, CYC1 and UQCRFS1), 2 core proteins (UQCRC1 and UQCRC2) and 6 low-molecular weight proteins (UQCRH/QCR6, UQCRB/QCR7, UQCRQ/QCR8, UQCR10/QCR9, UQCR11/QCR10 and a cleavage product of UQCRFS1). This cytochrome bc1 complex then forms a dimer.</text>
</comment>
<comment type="subcellular location">
    <subcellularLocation>
        <location evidence="2">Mitochondrion inner membrane</location>
        <topology evidence="2">Multi-pass membrane protein</topology>
    </subcellularLocation>
</comment>
<comment type="miscellaneous">
    <text evidence="1">Heme 1 (or BL or b562) is low-potential and absorbs at about 562 nm, and heme 2 (or BH or b566) is high-potential and absorbs at about 566 nm.</text>
</comment>
<comment type="similarity">
    <text evidence="3 4">Belongs to the cytochrome b family.</text>
</comment>
<comment type="caution">
    <text evidence="2">The full-length protein contains only eight transmembrane helices, not nine as predicted by bioinformatics tools.</text>
</comment>
<organism>
    <name type="scientific">Sorex ugyunak</name>
    <name type="common">Barren ground shrew</name>
    <dbReference type="NCBI Taxonomy" id="144778"/>
    <lineage>
        <taxon>Eukaryota</taxon>
        <taxon>Metazoa</taxon>
        <taxon>Chordata</taxon>
        <taxon>Craniata</taxon>
        <taxon>Vertebrata</taxon>
        <taxon>Euteleostomi</taxon>
        <taxon>Mammalia</taxon>
        <taxon>Eutheria</taxon>
        <taxon>Laurasiatheria</taxon>
        <taxon>Eulipotyphla</taxon>
        <taxon>Soricidae</taxon>
        <taxon>Soricinae</taxon>
        <taxon>Sorex</taxon>
    </lineage>
</organism>
<evidence type="ECO:0000250" key="1"/>
<evidence type="ECO:0000250" key="2">
    <source>
        <dbReference type="UniProtKB" id="P00157"/>
    </source>
</evidence>
<evidence type="ECO:0000255" key="3">
    <source>
        <dbReference type="PROSITE-ProRule" id="PRU00967"/>
    </source>
</evidence>
<evidence type="ECO:0000255" key="4">
    <source>
        <dbReference type="PROSITE-ProRule" id="PRU00968"/>
    </source>
</evidence>
<proteinExistence type="inferred from homology"/>